<comment type="function">
    <text evidence="2">Catalyzes the transfer of a methyl group onto N-acetylserotonin, producing melatonin (N-acetyl-5-methoxytryptamine).</text>
</comment>
<comment type="catalytic activity">
    <reaction evidence="2">
        <text>N-acetylserotonin + S-adenosyl-L-methionine = melatonin + S-adenosyl-L-homocysteine + H(+)</text>
        <dbReference type="Rhea" id="RHEA:15573"/>
        <dbReference type="ChEBI" id="CHEBI:15378"/>
        <dbReference type="ChEBI" id="CHEBI:16796"/>
        <dbReference type="ChEBI" id="CHEBI:17697"/>
        <dbReference type="ChEBI" id="CHEBI:57856"/>
        <dbReference type="ChEBI" id="CHEBI:59789"/>
        <dbReference type="EC" id="2.1.1.4"/>
    </reaction>
    <physiologicalReaction direction="left-to-right" evidence="2">
        <dbReference type="Rhea" id="RHEA:15574"/>
    </physiologicalReaction>
</comment>
<comment type="pathway">
    <text evidence="2">Aromatic compound metabolism; melatonin biosynthesis; melatonin from serotonin: step 1/2.</text>
</comment>
<comment type="subunit">
    <text evidence="1">Homodimer.</text>
</comment>
<comment type="tissue specificity">
    <text evidence="4 5">Expressed in the pineal gland (at protein level). Not detectable in retina, nor in liver.</text>
</comment>
<comment type="similarity">
    <text evidence="3">Belongs to the class I-like SAM-binding methyltransferase superfamily. Cation-independent O-methyltransferase family.</text>
</comment>
<protein>
    <recommendedName>
        <fullName>Acetylserotonin O-methyltransferase</fullName>
        <ecNumber evidence="2">2.1.1.4</ecNumber>
    </recommendedName>
    <alternativeName>
        <fullName>Hydroxyindole O-methyltransferase</fullName>
        <shortName>HIOMT</shortName>
    </alternativeName>
</protein>
<name>ASMT_BOVIN</name>
<proteinExistence type="evidence at protein level"/>
<keyword id="KW-0443">Lipid metabolism</keyword>
<keyword id="KW-0471">Melatonin biosynthesis</keyword>
<keyword id="KW-0489">Methyltransferase</keyword>
<keyword id="KW-1185">Reference proteome</keyword>
<keyword id="KW-0949">S-adenosyl-L-methionine</keyword>
<keyword id="KW-0808">Transferase</keyword>
<reference key="1">
    <citation type="journal article" date="1987" name="J. Biol. Chem.">
        <title>Molecular cloning and nucleotide sequence of cDNA encoding hydroxyindole O-methyltransferase of bovine pineal glands.</title>
        <authorList>
            <person name="Ishida I."/>
            <person name="Obinata M."/>
            <person name="Deguchi T."/>
        </authorList>
    </citation>
    <scope>NUCLEOTIDE SEQUENCE [MRNA]</scope>
    <scope>TISSUE SPECIFICITY</scope>
    <source>
        <tissue>Pineal gland</tissue>
    </source>
</reference>
<reference key="2">
    <citation type="journal article" date="1992" name="J. Biol. Chem.">
        <title>Bovine hydroxyindole-O-methyltransferase. Significant sequence revision.</title>
        <authorList>
            <person name="Donohue S.J."/>
            <person name="Roseboom P.H."/>
            <person name="Klein D.C."/>
        </authorList>
    </citation>
    <scope>NUCLEOTIDE SEQUENCE [MRNA]</scope>
    <scope>SEQUENCE REVISION</scope>
</reference>
<reference key="3">
    <citation type="journal article" date="1995" name="Brain Res.">
        <title>Human hydroxyindole-O-methyltransferase in pineal gland, retina and Y79 retinoblastoma cells.</title>
        <authorList>
            <person name="Bernard M."/>
            <person name="Donohue S.J."/>
            <person name="Klein D.C."/>
        </authorList>
    </citation>
    <scope>TISSUE SPECIFICITY</scope>
</reference>
<gene>
    <name type="primary">ASMT</name>
</gene>
<organism>
    <name type="scientific">Bos taurus</name>
    <name type="common">Bovine</name>
    <dbReference type="NCBI Taxonomy" id="9913"/>
    <lineage>
        <taxon>Eukaryota</taxon>
        <taxon>Metazoa</taxon>
        <taxon>Chordata</taxon>
        <taxon>Craniata</taxon>
        <taxon>Vertebrata</taxon>
        <taxon>Euteleostomi</taxon>
        <taxon>Mammalia</taxon>
        <taxon>Eutheria</taxon>
        <taxon>Laurasiatheria</taxon>
        <taxon>Artiodactyla</taxon>
        <taxon>Ruminantia</taxon>
        <taxon>Pecora</taxon>
        <taxon>Bovidae</taxon>
        <taxon>Bovinae</taxon>
        <taxon>Bos</taxon>
    </lineage>
</organism>
<feature type="chain" id="PRO_0000083980" description="Acetylserotonin O-methyltransferase">
    <location>
        <begin position="1"/>
        <end position="345"/>
    </location>
</feature>
<feature type="active site" description="Proton donor/acceptor" evidence="1">
    <location>
        <position position="255"/>
    </location>
</feature>
<feature type="binding site" evidence="3">
    <location>
        <position position="147"/>
    </location>
    <ligand>
        <name>S-adenosyl-L-methionine</name>
        <dbReference type="ChEBI" id="CHEBI:59789"/>
    </ligand>
</feature>
<feature type="binding site" evidence="3">
    <location>
        <position position="164"/>
    </location>
    <ligand>
        <name>S-adenosyl-L-methionine</name>
        <dbReference type="ChEBI" id="CHEBI:59789"/>
    </ligand>
</feature>
<feature type="binding site" evidence="3">
    <location>
        <position position="210"/>
    </location>
    <ligand>
        <name>S-adenosyl-L-methionine</name>
        <dbReference type="ChEBI" id="CHEBI:59789"/>
    </ligand>
</feature>
<feature type="binding site" evidence="3">
    <location>
        <begin position="235"/>
        <end position="237"/>
    </location>
    <ligand>
        <name>S-adenosyl-L-methionine</name>
        <dbReference type="ChEBI" id="CHEBI:59789"/>
    </ligand>
</feature>
<feature type="binding site" evidence="3">
    <location>
        <position position="252"/>
    </location>
    <ligand>
        <name>S-adenosyl-L-methionine</name>
        <dbReference type="ChEBI" id="CHEBI:59789"/>
    </ligand>
</feature>
<feature type="binding site" evidence="1">
    <location>
        <position position="256"/>
    </location>
    <ligand>
        <name>substrate</name>
    </ligand>
</feature>
<feature type="binding site" evidence="1">
    <location>
        <position position="302"/>
    </location>
    <ligand>
        <name>substrate</name>
    </ligand>
</feature>
<feature type="binding site" evidence="1">
    <location>
        <position position="306"/>
    </location>
    <ligand>
        <name>substrate</name>
    </ligand>
</feature>
<feature type="sequence conflict" description="In Ref. 1; AAA30565." evidence="6" ref="1">
    <original>G</original>
    <variation>A</variation>
    <location>
        <position position="18"/>
    </location>
</feature>
<feature type="sequence conflict" description="In Ref. 1; AAA30565." evidence="6" ref="1">
    <original>QGTELLLNTCVSLKLLQADVRGGKAVYANTELASTYLVRGSPRSQRDMLLYAGRTAYVCWRHLA</original>
    <variation>GDRAATEHLCVPEAAASRREGRKSCVCKHGARQHLPGERQPQVPAGHAAVRGQDRLRLLAPPG</variation>
    <location>
        <begin position="58"/>
        <end position="121"/>
    </location>
</feature>
<feature type="sequence conflict" description="In Ref. 1; AAA30565." evidence="6" ref="1">
    <original>AEYRALLGPAGFRDVRCRRTGGTYDAVLARK</original>
    <variation>GRSTARSVGPAASETCGDGGRGEPTMLSWPGNQACSV</variation>
    <location>
        <begin position="315"/>
        <end position="345"/>
    </location>
</feature>
<accession>P10950</accession>
<accession>Q28123</accession>
<sequence>MCSQEGEGYSLLKEYANGFMVSQVLFAACELGVFELLAEALEPLDSAAVSSHLGSSPQGTELLLNTCVSLKLLQADVRGGKAVYANTELASTYLVRGSPRSQRDMLLYAGRTAYVCWRHLAEAVREGRNQYLKAFGIPSEELFSAIYRSEDERLQFMQGLQDVWRLEGATVLAAFDLSPFPLICDLGGGSGALAKACVSLYPGCRAIVFDIPGVVQIAKRHFSASEDERISFHEGDFFKDALPEADLYILARVLHDWTDAKCSHLLQRVYRACRTGGGILVIESLLDTDGRGPLTTLLYSLNMLVQTEGRERTPAEYRALLGPAGFRDVRCRRTGGTYDAVLARK</sequence>
<evidence type="ECO:0000250" key="1"/>
<evidence type="ECO:0000250" key="2">
    <source>
        <dbReference type="UniProtKB" id="B3GSH5"/>
    </source>
</evidence>
<evidence type="ECO:0000255" key="3">
    <source>
        <dbReference type="PROSITE-ProRule" id="PRU01020"/>
    </source>
</evidence>
<evidence type="ECO:0000269" key="4">
    <source>
    </source>
</evidence>
<evidence type="ECO:0000269" key="5">
    <source>
    </source>
</evidence>
<evidence type="ECO:0000305" key="6"/>
<dbReference type="EC" id="2.1.1.4" evidence="2"/>
<dbReference type="EMBL" id="J02671">
    <property type="protein sequence ID" value="AAA30565.1"/>
    <property type="molecule type" value="mRNA"/>
</dbReference>
<dbReference type="EMBL" id="M81862">
    <property type="protein sequence ID" value="AAA30570.1"/>
    <property type="molecule type" value="mRNA"/>
</dbReference>
<dbReference type="PIR" id="A42106">
    <property type="entry name" value="A42106"/>
</dbReference>
<dbReference type="RefSeq" id="NP_803459.2">
    <property type="nucleotide sequence ID" value="NM_177493.3"/>
</dbReference>
<dbReference type="SMR" id="P10950"/>
<dbReference type="FunCoup" id="P10950">
    <property type="interactions" value="1"/>
</dbReference>
<dbReference type="STRING" id="9913.ENSBTAP00000064490"/>
<dbReference type="ChEMBL" id="CHEMBL3243914"/>
<dbReference type="PaxDb" id="9913-ENSBTAP00000054648"/>
<dbReference type="Ensembl" id="ENSBTAT00000067824.2">
    <property type="protein sequence ID" value="ENSBTAP00000064490.1"/>
    <property type="gene ID" value="ENSBTAG00000049541.2"/>
</dbReference>
<dbReference type="GeneID" id="281013"/>
<dbReference type="KEGG" id="bta:281013"/>
<dbReference type="CTD" id="438"/>
<dbReference type="VEuPathDB" id="HostDB:ENSBTAG00000049541"/>
<dbReference type="eggNOG" id="KOG3178">
    <property type="taxonomic scope" value="Eukaryota"/>
</dbReference>
<dbReference type="GeneTree" id="ENSGT00940000161561"/>
<dbReference type="InParanoid" id="P10950"/>
<dbReference type="OMA" id="FWPYVFG"/>
<dbReference type="OrthoDB" id="1606438at2759"/>
<dbReference type="Reactome" id="R-BTA-209931">
    <property type="pathway name" value="Serotonin and melatonin biosynthesis"/>
</dbReference>
<dbReference type="UniPathway" id="UPA00837">
    <property type="reaction ID" value="UER00815"/>
</dbReference>
<dbReference type="Proteomes" id="UP000009136">
    <property type="component" value="Chromosome 1"/>
</dbReference>
<dbReference type="Bgee" id="ENSBTAG00000049541">
    <property type="expression patterns" value="Expressed in biceps femoris and 79 other cell types or tissues"/>
</dbReference>
<dbReference type="GO" id="GO:0017096">
    <property type="term" value="F:acetylserotonin O-methyltransferase activity"/>
    <property type="evidence" value="ECO:0000250"/>
    <property type="project" value="UniProtKB"/>
</dbReference>
<dbReference type="GO" id="GO:0046983">
    <property type="term" value="F:protein dimerization activity"/>
    <property type="evidence" value="ECO:0007669"/>
    <property type="project" value="InterPro"/>
</dbReference>
<dbReference type="GO" id="GO:0006629">
    <property type="term" value="P:lipid metabolic process"/>
    <property type="evidence" value="ECO:0007669"/>
    <property type="project" value="UniProtKB-KW"/>
</dbReference>
<dbReference type="GO" id="GO:0030187">
    <property type="term" value="P:melatonin biosynthetic process"/>
    <property type="evidence" value="ECO:0000250"/>
    <property type="project" value="UniProtKB"/>
</dbReference>
<dbReference type="GO" id="GO:0032259">
    <property type="term" value="P:methylation"/>
    <property type="evidence" value="ECO:0000318"/>
    <property type="project" value="GO_Central"/>
</dbReference>
<dbReference type="CDD" id="cd02440">
    <property type="entry name" value="AdoMet_MTases"/>
    <property type="match status" value="1"/>
</dbReference>
<dbReference type="FunFam" id="1.10.10.10:FF:000358">
    <property type="entry name" value="Acetylserotonin O-methyltransferase"/>
    <property type="match status" value="1"/>
</dbReference>
<dbReference type="FunFam" id="3.40.50.150:FF:000738">
    <property type="entry name" value="Acetylserotonin O-methyltransferase"/>
    <property type="match status" value="1"/>
</dbReference>
<dbReference type="Gene3D" id="3.40.50.150">
    <property type="entry name" value="Vaccinia Virus protein VP39"/>
    <property type="match status" value="1"/>
</dbReference>
<dbReference type="Gene3D" id="1.10.10.10">
    <property type="entry name" value="Winged helix-like DNA-binding domain superfamily/Winged helix DNA-binding domain"/>
    <property type="match status" value="1"/>
</dbReference>
<dbReference type="InterPro" id="IPR016461">
    <property type="entry name" value="COMT-like"/>
</dbReference>
<dbReference type="InterPro" id="IPR001077">
    <property type="entry name" value="O_MeTrfase_dom"/>
</dbReference>
<dbReference type="InterPro" id="IPR012967">
    <property type="entry name" value="Plant_O-MeTrfase_dimerisation"/>
</dbReference>
<dbReference type="InterPro" id="IPR029063">
    <property type="entry name" value="SAM-dependent_MTases_sf"/>
</dbReference>
<dbReference type="InterPro" id="IPR036388">
    <property type="entry name" value="WH-like_DNA-bd_sf"/>
</dbReference>
<dbReference type="InterPro" id="IPR036390">
    <property type="entry name" value="WH_DNA-bd_sf"/>
</dbReference>
<dbReference type="PANTHER" id="PTHR43712:SF2">
    <property type="entry name" value="O-METHYLTRANSFERASE CICE"/>
    <property type="match status" value="1"/>
</dbReference>
<dbReference type="PANTHER" id="PTHR43712">
    <property type="entry name" value="PUTATIVE (AFU_ORTHOLOGUE AFUA_4G14580)-RELATED"/>
    <property type="match status" value="1"/>
</dbReference>
<dbReference type="Pfam" id="PF08100">
    <property type="entry name" value="Dimerisation"/>
    <property type="match status" value="1"/>
</dbReference>
<dbReference type="Pfam" id="PF00891">
    <property type="entry name" value="Methyltransf_2"/>
    <property type="match status" value="1"/>
</dbReference>
<dbReference type="PIRSF" id="PIRSF005739">
    <property type="entry name" value="O-mtase"/>
    <property type="match status" value="1"/>
</dbReference>
<dbReference type="SUPFAM" id="SSF53335">
    <property type="entry name" value="S-adenosyl-L-methionine-dependent methyltransferases"/>
    <property type="match status" value="1"/>
</dbReference>
<dbReference type="SUPFAM" id="SSF46785">
    <property type="entry name" value="Winged helix' DNA-binding domain"/>
    <property type="match status" value="1"/>
</dbReference>
<dbReference type="PROSITE" id="PS51683">
    <property type="entry name" value="SAM_OMT_II"/>
    <property type="match status" value="1"/>
</dbReference>